<dbReference type="EC" id="2.7.2.8" evidence="1"/>
<dbReference type="EMBL" id="CP000886">
    <property type="protein sequence ID" value="ABX70398.1"/>
    <property type="molecule type" value="Genomic_DNA"/>
</dbReference>
<dbReference type="SMR" id="A9N0G9"/>
<dbReference type="KEGG" id="spq:SPAB_05107"/>
<dbReference type="PATRIC" id="fig|1016998.12.peg.4793"/>
<dbReference type="HOGENOM" id="CLU_053680_1_1_6"/>
<dbReference type="BioCyc" id="SENT1016998:SPAB_RS20780-MONOMER"/>
<dbReference type="UniPathway" id="UPA00068">
    <property type="reaction ID" value="UER00107"/>
</dbReference>
<dbReference type="Proteomes" id="UP000008556">
    <property type="component" value="Chromosome"/>
</dbReference>
<dbReference type="GO" id="GO:0005737">
    <property type="term" value="C:cytoplasm"/>
    <property type="evidence" value="ECO:0007669"/>
    <property type="project" value="UniProtKB-SubCell"/>
</dbReference>
<dbReference type="GO" id="GO:0003991">
    <property type="term" value="F:acetylglutamate kinase activity"/>
    <property type="evidence" value="ECO:0007669"/>
    <property type="project" value="UniProtKB-UniRule"/>
</dbReference>
<dbReference type="GO" id="GO:0005524">
    <property type="term" value="F:ATP binding"/>
    <property type="evidence" value="ECO:0007669"/>
    <property type="project" value="UniProtKB-UniRule"/>
</dbReference>
<dbReference type="GO" id="GO:0042450">
    <property type="term" value="P:arginine biosynthetic process via ornithine"/>
    <property type="evidence" value="ECO:0007669"/>
    <property type="project" value="UniProtKB-UniRule"/>
</dbReference>
<dbReference type="GO" id="GO:0006526">
    <property type="term" value="P:L-arginine biosynthetic process"/>
    <property type="evidence" value="ECO:0007669"/>
    <property type="project" value="UniProtKB-UniPathway"/>
</dbReference>
<dbReference type="CDD" id="cd04249">
    <property type="entry name" value="AAK_NAGK-NC"/>
    <property type="match status" value="1"/>
</dbReference>
<dbReference type="FunFam" id="3.40.1160.10:FF:000008">
    <property type="entry name" value="Acetylglutamate kinase"/>
    <property type="match status" value="1"/>
</dbReference>
<dbReference type="Gene3D" id="3.40.1160.10">
    <property type="entry name" value="Acetylglutamate kinase-like"/>
    <property type="match status" value="1"/>
</dbReference>
<dbReference type="HAMAP" id="MF_00082">
    <property type="entry name" value="ArgB"/>
    <property type="match status" value="1"/>
</dbReference>
<dbReference type="InterPro" id="IPR036393">
    <property type="entry name" value="AceGlu_kinase-like_sf"/>
</dbReference>
<dbReference type="InterPro" id="IPR004662">
    <property type="entry name" value="AcgluKinase_fam"/>
</dbReference>
<dbReference type="InterPro" id="IPR037528">
    <property type="entry name" value="ArgB"/>
</dbReference>
<dbReference type="InterPro" id="IPR001048">
    <property type="entry name" value="Asp/Glu/Uridylate_kinase"/>
</dbReference>
<dbReference type="InterPro" id="IPR041731">
    <property type="entry name" value="NAGK-NC"/>
</dbReference>
<dbReference type="NCBIfam" id="TIGR00761">
    <property type="entry name" value="argB"/>
    <property type="match status" value="1"/>
</dbReference>
<dbReference type="PANTHER" id="PTHR23342">
    <property type="entry name" value="N-ACETYLGLUTAMATE SYNTHASE"/>
    <property type="match status" value="1"/>
</dbReference>
<dbReference type="PANTHER" id="PTHR23342:SF0">
    <property type="entry name" value="N-ACETYLGLUTAMATE SYNTHASE, MITOCHONDRIAL"/>
    <property type="match status" value="1"/>
</dbReference>
<dbReference type="Pfam" id="PF00696">
    <property type="entry name" value="AA_kinase"/>
    <property type="match status" value="1"/>
</dbReference>
<dbReference type="PIRSF" id="PIRSF000728">
    <property type="entry name" value="NAGK"/>
    <property type="match status" value="1"/>
</dbReference>
<dbReference type="SUPFAM" id="SSF53633">
    <property type="entry name" value="Carbamate kinase-like"/>
    <property type="match status" value="1"/>
</dbReference>
<protein>
    <recommendedName>
        <fullName evidence="1">Acetylglutamate kinase</fullName>
        <ecNumber evidence="1">2.7.2.8</ecNumber>
    </recommendedName>
    <alternativeName>
        <fullName evidence="1">N-acetyl-L-glutamate 5-phosphotransferase</fullName>
    </alternativeName>
    <alternativeName>
        <fullName evidence="1">NAG kinase</fullName>
        <shortName evidence="1">NAGK</shortName>
    </alternativeName>
</protein>
<feature type="chain" id="PRO_0000335662" description="Acetylglutamate kinase">
    <location>
        <begin position="1"/>
        <end position="257"/>
    </location>
</feature>
<feature type="binding site" evidence="1">
    <location>
        <begin position="43"/>
        <end position="44"/>
    </location>
    <ligand>
        <name>substrate</name>
    </ligand>
</feature>
<feature type="binding site" evidence="1">
    <location>
        <position position="65"/>
    </location>
    <ligand>
        <name>substrate</name>
    </ligand>
</feature>
<feature type="binding site" evidence="1">
    <location>
        <position position="157"/>
    </location>
    <ligand>
        <name>substrate</name>
    </ligand>
</feature>
<feature type="binding site" evidence="1">
    <location>
        <begin position="180"/>
        <end position="185"/>
    </location>
    <ligand>
        <name>ATP</name>
        <dbReference type="ChEBI" id="CHEBI:30616"/>
    </ligand>
</feature>
<feature type="binding site" evidence="1">
    <location>
        <begin position="208"/>
        <end position="210"/>
    </location>
    <ligand>
        <name>ATP</name>
        <dbReference type="ChEBI" id="CHEBI:30616"/>
    </ligand>
</feature>
<feature type="site" description="Transition state stabilizer" evidence="1">
    <location>
        <position position="7"/>
    </location>
</feature>
<feature type="site" description="Transition state stabilizer" evidence="1">
    <location>
        <position position="216"/>
    </location>
</feature>
<organism>
    <name type="scientific">Salmonella paratyphi B (strain ATCC BAA-1250 / SPB7)</name>
    <dbReference type="NCBI Taxonomy" id="1016998"/>
    <lineage>
        <taxon>Bacteria</taxon>
        <taxon>Pseudomonadati</taxon>
        <taxon>Pseudomonadota</taxon>
        <taxon>Gammaproteobacteria</taxon>
        <taxon>Enterobacterales</taxon>
        <taxon>Enterobacteriaceae</taxon>
        <taxon>Salmonella</taxon>
    </lineage>
</organism>
<name>ARGB_SALPB</name>
<comment type="function">
    <text evidence="1">Catalyzes the ATP-dependent phosphorylation of N-acetyl-L-glutamate.</text>
</comment>
<comment type="catalytic activity">
    <reaction evidence="1">
        <text>N-acetyl-L-glutamate + ATP = N-acetyl-L-glutamyl 5-phosphate + ADP</text>
        <dbReference type="Rhea" id="RHEA:14629"/>
        <dbReference type="ChEBI" id="CHEBI:30616"/>
        <dbReference type="ChEBI" id="CHEBI:44337"/>
        <dbReference type="ChEBI" id="CHEBI:57936"/>
        <dbReference type="ChEBI" id="CHEBI:456216"/>
        <dbReference type="EC" id="2.7.2.8"/>
    </reaction>
</comment>
<comment type="pathway">
    <text evidence="1">Amino-acid biosynthesis; L-arginine biosynthesis; N(2)-acetyl-L-ornithine from L-glutamate: step 2/4.</text>
</comment>
<comment type="subunit">
    <text evidence="1">Homodimer.</text>
</comment>
<comment type="subcellular location">
    <subcellularLocation>
        <location evidence="1">Cytoplasm</location>
    </subcellularLocation>
</comment>
<comment type="similarity">
    <text evidence="1">Belongs to the acetylglutamate kinase family. ArgB subfamily.</text>
</comment>
<proteinExistence type="inferred from homology"/>
<keyword id="KW-0028">Amino-acid biosynthesis</keyword>
<keyword id="KW-0055">Arginine biosynthesis</keyword>
<keyword id="KW-0067">ATP-binding</keyword>
<keyword id="KW-0963">Cytoplasm</keyword>
<keyword id="KW-0418">Kinase</keyword>
<keyword id="KW-0547">Nucleotide-binding</keyword>
<keyword id="KW-0808">Transferase</keyword>
<reference key="1">
    <citation type="submission" date="2007-11" db="EMBL/GenBank/DDBJ databases">
        <authorList>
            <consortium name="The Salmonella enterica serovar Paratyphi B Genome Sequencing Project"/>
            <person name="McClelland M."/>
            <person name="Sanderson E.K."/>
            <person name="Porwollik S."/>
            <person name="Spieth J."/>
            <person name="Clifton W.S."/>
            <person name="Fulton R."/>
            <person name="Cordes M."/>
            <person name="Wollam A."/>
            <person name="Shah N."/>
            <person name="Pepin K."/>
            <person name="Bhonagiri V."/>
            <person name="Nash W."/>
            <person name="Johnson M."/>
            <person name="Thiruvilangam P."/>
            <person name="Wilson R."/>
        </authorList>
    </citation>
    <scope>NUCLEOTIDE SEQUENCE [LARGE SCALE GENOMIC DNA]</scope>
    <source>
        <strain>ATCC BAA-1250 / SPB7</strain>
    </source>
</reference>
<evidence type="ECO:0000255" key="1">
    <source>
        <dbReference type="HAMAP-Rule" id="MF_00082"/>
    </source>
</evidence>
<accession>A9N0G9</accession>
<gene>
    <name evidence="1" type="primary">argB</name>
    <name type="ordered locus">SPAB_05107</name>
</gene>
<sequence length="257" mass="26875">MNPLIIKLGGVLLDSEEALERLFTALVNYRESHQRPLVIVHGGGCVVDELMKGLNLPVKKKDGLRVTPADQIGIITGALAGTANKTLLAWAKKHHIASVGLFLGDGDSVNVTQLNEALGHVGLAQPGSPKLINMLLENGFLPVVSSIGVTDDGQLMNVNADQAATALAATLGADLILLSDVSGILDGKGQRIAEMTASKAEQLIDQGIITDGMIVKVNAALDAARALGRPVDIASWRHAEQLPALFNGTPIGTRILA</sequence>